<sequence length="213" mass="23062">MQPYQRDFIRFAIDRGVLRFGEFTLKSGRTSPYFFNAGLFNTGSALAQLGRCYAAAIVDSKIPFDVLFGPAYKGIPLAAATAVALAEQHQLDVPWCFNRKEAKDHGEGGSLVGAPLAGDVLIIDDVITAGTAIREVMQIINAQQAKAAGVLIALNREERGNGELSAIQEVERDFGIPVVSIVSLTQVLEFLADDPQLKQHLPAVEAYRAQYGI</sequence>
<evidence type="ECO:0000255" key="1">
    <source>
        <dbReference type="HAMAP-Rule" id="MF_01208"/>
    </source>
</evidence>
<name>PYRE_PSEPW</name>
<gene>
    <name evidence="1" type="primary">pyrE</name>
    <name type="ordered locus">PputW619_0181</name>
</gene>
<proteinExistence type="inferred from homology"/>
<organism>
    <name type="scientific">Pseudomonas putida (strain W619)</name>
    <dbReference type="NCBI Taxonomy" id="390235"/>
    <lineage>
        <taxon>Bacteria</taxon>
        <taxon>Pseudomonadati</taxon>
        <taxon>Pseudomonadota</taxon>
        <taxon>Gammaproteobacteria</taxon>
        <taxon>Pseudomonadales</taxon>
        <taxon>Pseudomonadaceae</taxon>
        <taxon>Pseudomonas</taxon>
    </lineage>
</organism>
<reference key="1">
    <citation type="submission" date="2008-02" db="EMBL/GenBank/DDBJ databases">
        <title>Complete sequence of Pseudomonas putida W619.</title>
        <authorList>
            <person name="Copeland A."/>
            <person name="Lucas S."/>
            <person name="Lapidus A."/>
            <person name="Barry K."/>
            <person name="Detter J.C."/>
            <person name="Glavina del Rio T."/>
            <person name="Dalin E."/>
            <person name="Tice H."/>
            <person name="Pitluck S."/>
            <person name="Chain P."/>
            <person name="Malfatti S."/>
            <person name="Shin M."/>
            <person name="Vergez L."/>
            <person name="Schmutz J."/>
            <person name="Larimer F."/>
            <person name="Land M."/>
            <person name="Hauser L."/>
            <person name="Kyrpides N."/>
            <person name="Kim E."/>
            <person name="Taghavi S."/>
            <person name="Vangronsveld D."/>
            <person name="van der Lelie D."/>
            <person name="Richardson P."/>
        </authorList>
    </citation>
    <scope>NUCLEOTIDE SEQUENCE [LARGE SCALE GENOMIC DNA]</scope>
    <source>
        <strain>W619</strain>
    </source>
</reference>
<dbReference type="EC" id="2.4.2.10" evidence="1"/>
<dbReference type="EMBL" id="CP000949">
    <property type="protein sequence ID" value="ACA70687.1"/>
    <property type="molecule type" value="Genomic_DNA"/>
</dbReference>
<dbReference type="SMR" id="B1J4L6"/>
<dbReference type="STRING" id="390235.PputW619_0181"/>
<dbReference type="KEGG" id="ppw:PputW619_0181"/>
<dbReference type="eggNOG" id="COG0461">
    <property type="taxonomic scope" value="Bacteria"/>
</dbReference>
<dbReference type="HOGENOM" id="CLU_074878_0_1_6"/>
<dbReference type="OrthoDB" id="9779060at2"/>
<dbReference type="UniPathway" id="UPA00070">
    <property type="reaction ID" value="UER00119"/>
</dbReference>
<dbReference type="GO" id="GO:0005737">
    <property type="term" value="C:cytoplasm"/>
    <property type="evidence" value="ECO:0007669"/>
    <property type="project" value="TreeGrafter"/>
</dbReference>
<dbReference type="GO" id="GO:0000287">
    <property type="term" value="F:magnesium ion binding"/>
    <property type="evidence" value="ECO:0007669"/>
    <property type="project" value="UniProtKB-UniRule"/>
</dbReference>
<dbReference type="GO" id="GO:0004588">
    <property type="term" value="F:orotate phosphoribosyltransferase activity"/>
    <property type="evidence" value="ECO:0007669"/>
    <property type="project" value="UniProtKB-UniRule"/>
</dbReference>
<dbReference type="GO" id="GO:0006207">
    <property type="term" value="P:'de novo' pyrimidine nucleobase biosynthetic process"/>
    <property type="evidence" value="ECO:0007669"/>
    <property type="project" value="TreeGrafter"/>
</dbReference>
<dbReference type="GO" id="GO:0044205">
    <property type="term" value="P:'de novo' UMP biosynthetic process"/>
    <property type="evidence" value="ECO:0007669"/>
    <property type="project" value="UniProtKB-UniRule"/>
</dbReference>
<dbReference type="GO" id="GO:0046132">
    <property type="term" value="P:pyrimidine ribonucleoside biosynthetic process"/>
    <property type="evidence" value="ECO:0007669"/>
    <property type="project" value="TreeGrafter"/>
</dbReference>
<dbReference type="CDD" id="cd06223">
    <property type="entry name" value="PRTases_typeI"/>
    <property type="match status" value="1"/>
</dbReference>
<dbReference type="FunFam" id="3.40.50.2020:FF:000008">
    <property type="entry name" value="Orotate phosphoribosyltransferase"/>
    <property type="match status" value="1"/>
</dbReference>
<dbReference type="Gene3D" id="3.40.50.2020">
    <property type="match status" value="1"/>
</dbReference>
<dbReference type="HAMAP" id="MF_01208">
    <property type="entry name" value="PyrE"/>
    <property type="match status" value="1"/>
</dbReference>
<dbReference type="InterPro" id="IPR023031">
    <property type="entry name" value="OPRT"/>
</dbReference>
<dbReference type="InterPro" id="IPR004467">
    <property type="entry name" value="Or_phspho_trans_dom"/>
</dbReference>
<dbReference type="InterPro" id="IPR000836">
    <property type="entry name" value="PRibTrfase_dom"/>
</dbReference>
<dbReference type="InterPro" id="IPR029057">
    <property type="entry name" value="PRTase-like"/>
</dbReference>
<dbReference type="NCBIfam" id="TIGR00336">
    <property type="entry name" value="pyrE"/>
    <property type="match status" value="1"/>
</dbReference>
<dbReference type="PANTHER" id="PTHR46683">
    <property type="entry name" value="OROTATE PHOSPHORIBOSYLTRANSFERASE 1-RELATED"/>
    <property type="match status" value="1"/>
</dbReference>
<dbReference type="PANTHER" id="PTHR46683:SF1">
    <property type="entry name" value="OROTATE PHOSPHORIBOSYLTRANSFERASE 1-RELATED"/>
    <property type="match status" value="1"/>
</dbReference>
<dbReference type="Pfam" id="PF00156">
    <property type="entry name" value="Pribosyltran"/>
    <property type="match status" value="1"/>
</dbReference>
<dbReference type="SUPFAM" id="SSF53271">
    <property type="entry name" value="PRTase-like"/>
    <property type="match status" value="1"/>
</dbReference>
<dbReference type="PROSITE" id="PS00103">
    <property type="entry name" value="PUR_PYR_PR_TRANSFER"/>
    <property type="match status" value="1"/>
</dbReference>
<keyword id="KW-0328">Glycosyltransferase</keyword>
<keyword id="KW-0460">Magnesium</keyword>
<keyword id="KW-0665">Pyrimidine biosynthesis</keyword>
<keyword id="KW-0808">Transferase</keyword>
<comment type="function">
    <text evidence="1">Catalyzes the transfer of a ribosyl phosphate group from 5-phosphoribose 1-diphosphate to orotate, leading to the formation of orotidine monophosphate (OMP).</text>
</comment>
<comment type="catalytic activity">
    <reaction evidence="1">
        <text>orotidine 5'-phosphate + diphosphate = orotate + 5-phospho-alpha-D-ribose 1-diphosphate</text>
        <dbReference type="Rhea" id="RHEA:10380"/>
        <dbReference type="ChEBI" id="CHEBI:30839"/>
        <dbReference type="ChEBI" id="CHEBI:33019"/>
        <dbReference type="ChEBI" id="CHEBI:57538"/>
        <dbReference type="ChEBI" id="CHEBI:58017"/>
        <dbReference type="EC" id="2.4.2.10"/>
    </reaction>
</comment>
<comment type="cofactor">
    <cofactor evidence="1">
        <name>Mg(2+)</name>
        <dbReference type="ChEBI" id="CHEBI:18420"/>
    </cofactor>
</comment>
<comment type="pathway">
    <text evidence="1">Pyrimidine metabolism; UMP biosynthesis via de novo pathway; UMP from orotate: step 1/2.</text>
</comment>
<comment type="subunit">
    <text evidence="1">Homodimer.</text>
</comment>
<comment type="similarity">
    <text evidence="1">Belongs to the purine/pyrimidine phosphoribosyltransferase family. PyrE subfamily.</text>
</comment>
<protein>
    <recommendedName>
        <fullName evidence="1">Orotate phosphoribosyltransferase</fullName>
        <shortName evidence="1">OPRT</shortName>
        <shortName evidence="1">OPRTase</shortName>
        <ecNumber evidence="1">2.4.2.10</ecNumber>
    </recommendedName>
</protein>
<accession>B1J4L6</accession>
<feature type="chain" id="PRO_1000164688" description="Orotate phosphoribosyltransferase">
    <location>
        <begin position="1"/>
        <end position="213"/>
    </location>
</feature>
<feature type="binding site" description="in other chain" evidence="1">
    <location>
        <position position="26"/>
    </location>
    <ligand>
        <name>5-phospho-alpha-D-ribose 1-diphosphate</name>
        <dbReference type="ChEBI" id="CHEBI:58017"/>
        <note>ligand shared between dimeric partners</note>
    </ligand>
</feature>
<feature type="binding site" evidence="1">
    <location>
        <begin position="34"/>
        <end position="35"/>
    </location>
    <ligand>
        <name>orotate</name>
        <dbReference type="ChEBI" id="CHEBI:30839"/>
    </ligand>
</feature>
<feature type="binding site" description="in other chain" evidence="1">
    <location>
        <begin position="72"/>
        <end position="73"/>
    </location>
    <ligand>
        <name>5-phospho-alpha-D-ribose 1-diphosphate</name>
        <dbReference type="ChEBI" id="CHEBI:58017"/>
        <note>ligand shared between dimeric partners</note>
    </ligand>
</feature>
<feature type="binding site" evidence="1">
    <location>
        <position position="99"/>
    </location>
    <ligand>
        <name>5-phospho-alpha-D-ribose 1-diphosphate</name>
        <dbReference type="ChEBI" id="CHEBI:58017"/>
        <note>ligand shared between dimeric partners</note>
    </ligand>
</feature>
<feature type="binding site" description="in other chain" evidence="1">
    <location>
        <position position="100"/>
    </location>
    <ligand>
        <name>5-phospho-alpha-D-ribose 1-diphosphate</name>
        <dbReference type="ChEBI" id="CHEBI:58017"/>
        <note>ligand shared between dimeric partners</note>
    </ligand>
</feature>
<feature type="binding site" evidence="1">
    <location>
        <position position="103"/>
    </location>
    <ligand>
        <name>5-phospho-alpha-D-ribose 1-diphosphate</name>
        <dbReference type="ChEBI" id="CHEBI:58017"/>
        <note>ligand shared between dimeric partners</note>
    </ligand>
</feature>
<feature type="binding site" evidence="1">
    <location>
        <position position="105"/>
    </location>
    <ligand>
        <name>5-phospho-alpha-D-ribose 1-diphosphate</name>
        <dbReference type="ChEBI" id="CHEBI:58017"/>
        <note>ligand shared between dimeric partners</note>
    </ligand>
</feature>
<feature type="binding site" description="in other chain" evidence="1">
    <location>
        <begin position="124"/>
        <end position="132"/>
    </location>
    <ligand>
        <name>5-phospho-alpha-D-ribose 1-diphosphate</name>
        <dbReference type="ChEBI" id="CHEBI:58017"/>
        <note>ligand shared between dimeric partners</note>
    </ligand>
</feature>
<feature type="binding site" evidence="1">
    <location>
        <position position="128"/>
    </location>
    <ligand>
        <name>orotate</name>
        <dbReference type="ChEBI" id="CHEBI:30839"/>
    </ligand>
</feature>
<feature type="binding site" evidence="1">
    <location>
        <position position="156"/>
    </location>
    <ligand>
        <name>orotate</name>
        <dbReference type="ChEBI" id="CHEBI:30839"/>
    </ligand>
</feature>